<evidence type="ECO:0000250" key="1"/>
<evidence type="ECO:0000250" key="2">
    <source>
        <dbReference type="UniProtKB" id="O14545"/>
    </source>
</evidence>
<evidence type="ECO:0000256" key="3">
    <source>
        <dbReference type="SAM" id="MobiDB-lite"/>
    </source>
</evidence>
<feature type="initiator methionine" description="Removed" evidence="2">
    <location>
        <position position="1"/>
    </location>
</feature>
<feature type="chain" id="PRO_0000278458" description="TRAF-type zinc finger domain-containing protein 1">
    <location>
        <begin position="2"/>
        <end position="582"/>
    </location>
</feature>
<feature type="zinc finger region" description="TRAF-type">
    <location>
        <begin position="27"/>
        <end position="103"/>
    </location>
</feature>
<feature type="region of interest" description="Disordered" evidence="3">
    <location>
        <begin position="216"/>
        <end position="238"/>
    </location>
</feature>
<feature type="region of interest" description="Disordered" evidence="3">
    <location>
        <begin position="402"/>
        <end position="509"/>
    </location>
</feature>
<feature type="region of interest" description="Disordered" evidence="3">
    <location>
        <begin position="522"/>
        <end position="582"/>
    </location>
</feature>
<feature type="compositionally biased region" description="Polar residues" evidence="3">
    <location>
        <begin position="454"/>
        <end position="471"/>
    </location>
</feature>
<feature type="compositionally biased region" description="Polar residues" evidence="3">
    <location>
        <begin position="486"/>
        <end position="504"/>
    </location>
</feature>
<feature type="modified residue" description="N-acetylalanine" evidence="2">
    <location>
        <position position="2"/>
    </location>
</feature>
<feature type="modified residue" description="Phosphoserine" evidence="2">
    <location>
        <position position="191"/>
    </location>
</feature>
<feature type="modified residue" description="Phosphoserine" evidence="2">
    <location>
        <position position="278"/>
    </location>
</feature>
<feature type="modified residue" description="Phosphoserine" evidence="2">
    <location>
        <position position="320"/>
    </location>
</feature>
<feature type="modified residue" description="Phosphoserine" evidence="2">
    <location>
        <position position="326"/>
    </location>
</feature>
<feature type="modified residue" description="Phosphoserine" evidence="2">
    <location>
        <position position="327"/>
    </location>
</feature>
<feature type="modified residue" description="Phosphoserine" evidence="2">
    <location>
        <position position="409"/>
    </location>
</feature>
<feature type="modified residue" description="Phosphoserine" evidence="2">
    <location>
        <position position="415"/>
    </location>
</feature>
<feature type="modified residue" description="Phosphoserine" evidence="2">
    <location>
        <position position="430"/>
    </location>
</feature>
<feature type="modified residue" description="Phosphoserine" evidence="2">
    <location>
        <position position="470"/>
    </location>
</feature>
<protein>
    <recommendedName>
        <fullName>TRAF-type zinc finger domain-containing protein 1</fullName>
    </recommendedName>
</protein>
<keyword id="KW-0007">Acetylation</keyword>
<keyword id="KW-0479">Metal-binding</keyword>
<keyword id="KW-0597">Phosphoprotein</keyword>
<keyword id="KW-1185">Reference proteome</keyword>
<keyword id="KW-0862">Zinc</keyword>
<keyword id="KW-0863">Zinc-finger</keyword>
<dbReference type="EMBL" id="AB168226">
    <property type="protein sequence ID" value="BAE00351.1"/>
    <property type="molecule type" value="mRNA"/>
</dbReference>
<dbReference type="RefSeq" id="NP_001271978.1">
    <property type="nucleotide sequence ID" value="NM_001285049.1"/>
</dbReference>
<dbReference type="BMRB" id="Q4R970"/>
<dbReference type="STRING" id="9541.ENSMFAP00000008410"/>
<dbReference type="eggNOG" id="ENOG502QQRU">
    <property type="taxonomic scope" value="Eukaryota"/>
</dbReference>
<dbReference type="Proteomes" id="UP000233100">
    <property type="component" value="Unplaced"/>
</dbReference>
<dbReference type="GO" id="GO:0005739">
    <property type="term" value="C:mitochondrion"/>
    <property type="evidence" value="ECO:0007669"/>
    <property type="project" value="TreeGrafter"/>
</dbReference>
<dbReference type="GO" id="GO:0008270">
    <property type="term" value="F:zinc ion binding"/>
    <property type="evidence" value="ECO:0007669"/>
    <property type="project" value="UniProtKB-KW"/>
</dbReference>
<dbReference type="GO" id="GO:0045824">
    <property type="term" value="P:negative regulation of innate immune response"/>
    <property type="evidence" value="ECO:0000250"/>
    <property type="project" value="UniProtKB"/>
</dbReference>
<dbReference type="FunFam" id="3.30.40.10:FF:000378">
    <property type="entry name" value="TRAF-type zinc finger domain-containing 1"/>
    <property type="match status" value="1"/>
</dbReference>
<dbReference type="FunFam" id="3.30.40.10:FF:000402">
    <property type="entry name" value="TRAF-type zinc finger domain-containing protein 1"/>
    <property type="match status" value="1"/>
</dbReference>
<dbReference type="Gene3D" id="3.30.40.10">
    <property type="entry name" value="Zinc/RING finger domain, C3HC4 (zinc finger)"/>
    <property type="match status" value="2"/>
</dbReference>
<dbReference type="InterPro" id="IPR051986">
    <property type="entry name" value="Innate_Immune_Apopt_Reg"/>
</dbReference>
<dbReference type="InterPro" id="IPR049439">
    <property type="entry name" value="TRAFD1-XIAF1_Znf"/>
</dbReference>
<dbReference type="InterPro" id="IPR013083">
    <property type="entry name" value="Znf_RING/FYVE/PHD"/>
</dbReference>
<dbReference type="PANTHER" id="PTHR16295:SF19">
    <property type="entry name" value="TRAF-TYPE ZINC FINGER DOMAIN-CONTAINING PROTEIN 1"/>
    <property type="match status" value="1"/>
</dbReference>
<dbReference type="PANTHER" id="PTHR16295">
    <property type="entry name" value="TRAF-TYPE ZINC FINGER PROTEIN-RELATED"/>
    <property type="match status" value="1"/>
</dbReference>
<dbReference type="Pfam" id="PF21366">
    <property type="entry name" value="TRAFD1-XIAF1_ZnF"/>
    <property type="match status" value="1"/>
</dbReference>
<comment type="function">
    <text evidence="1">Negative feedback regulator that controls excessive innate immune responses. Regulates both Toll-like receptor 4 (TLR4) and DDX58/RIG1-like helicases (RLH) pathways. May inhibit the LTR pathway by direct interaction with TRAF6 and attenuation of NF-kappa-B activation. May negatively regulate the RLH pathway downstream from MAVS and upstream of NF-kappa-B and IRF3 (By similarity).</text>
</comment>
<comment type="subunit">
    <text evidence="1">Interacts with MAVS, TICAM1, TRAF1, TRAF2, TRAF3 and TRAF6.</text>
</comment>
<accession>Q4R970</accession>
<gene>
    <name type="primary">TRAFD1</name>
    <name type="ORF">QtsA-10625</name>
</gene>
<name>TRAD1_MACFA</name>
<sequence>MAEFLDDQETRLCDNCKKEIPVFNFTIHEIHCQRNIGMCPICKEPFPKSDMETHMAAEHCQVTCKCNKKLEKRLLKKHEETECPLRLAVCQHCDLELSILKLKEHEDYCGARTELCGNCGRNVLVKDLKTHPEVCGREGEEKRNEVAIPPNAYDESWGQDGIWIASQLLRQIEALDPPMRLPQRPLRAFESDVFHDRTTNQRNITAQVSIQNNLFEEQERQERNRGQQPPKEGGEDGANLDFMLALSLQNEGQASSVAEQDFWRAVCEADQSHGGPSSLSDIKGAADETMLPCEFCEELYPEELLIDHQTSCNPSRALPSLNTGSSSPRGVEEHDVIFQNFLQQAASKQLDSLMGLSSSRLVEESIIIPCEFCGVQLEEEVLFHHQDQCDQRPATATNHVTEGIPRLDSQPQENSPELPRRRVRHQGDLSSGYLDDIKQETANGPTSCLPPSRPFNNMTATYNQLSRSTSGPRPGCQPSPPRVLKLNNSDSQDIQGRNQNSQNGAIAPGHISVIRPPQSLYPENIVPSFPHGPAGRYGASGRSEGGRNSRVTPAAANYRSRTAKAKPSKQQGAGDAEEEEEE</sequence>
<reference key="1">
    <citation type="submission" date="2005-06" db="EMBL/GenBank/DDBJ databases">
        <title>DNA sequences of macaque genes expressed in brain or testis and its evolutionary implications.</title>
        <authorList>
            <consortium name="International consortium for macaque cDNA sequencing and analysis"/>
        </authorList>
    </citation>
    <scope>NUCLEOTIDE SEQUENCE [LARGE SCALE MRNA]</scope>
    <source>
        <tissue>Testis</tissue>
    </source>
</reference>
<proteinExistence type="evidence at transcript level"/>
<organism>
    <name type="scientific">Macaca fascicularis</name>
    <name type="common">Crab-eating macaque</name>
    <name type="synonym">Cynomolgus monkey</name>
    <dbReference type="NCBI Taxonomy" id="9541"/>
    <lineage>
        <taxon>Eukaryota</taxon>
        <taxon>Metazoa</taxon>
        <taxon>Chordata</taxon>
        <taxon>Craniata</taxon>
        <taxon>Vertebrata</taxon>
        <taxon>Euteleostomi</taxon>
        <taxon>Mammalia</taxon>
        <taxon>Eutheria</taxon>
        <taxon>Euarchontoglires</taxon>
        <taxon>Primates</taxon>
        <taxon>Haplorrhini</taxon>
        <taxon>Catarrhini</taxon>
        <taxon>Cercopithecidae</taxon>
        <taxon>Cercopithecinae</taxon>
        <taxon>Macaca</taxon>
    </lineage>
</organism>